<dbReference type="EC" id="2.7.4.6" evidence="1"/>
<dbReference type="EMBL" id="CP000436">
    <property type="protein sequence ID" value="ABI24665.1"/>
    <property type="molecule type" value="Genomic_DNA"/>
</dbReference>
<dbReference type="SMR" id="Q0I2G6"/>
<dbReference type="KEGG" id="hso:HS_0387"/>
<dbReference type="eggNOG" id="COG0105">
    <property type="taxonomic scope" value="Bacteria"/>
</dbReference>
<dbReference type="HOGENOM" id="CLU_060216_8_1_6"/>
<dbReference type="GO" id="GO:0005737">
    <property type="term" value="C:cytoplasm"/>
    <property type="evidence" value="ECO:0007669"/>
    <property type="project" value="UniProtKB-SubCell"/>
</dbReference>
<dbReference type="GO" id="GO:0005524">
    <property type="term" value="F:ATP binding"/>
    <property type="evidence" value="ECO:0007669"/>
    <property type="project" value="UniProtKB-UniRule"/>
</dbReference>
<dbReference type="GO" id="GO:0046872">
    <property type="term" value="F:metal ion binding"/>
    <property type="evidence" value="ECO:0007669"/>
    <property type="project" value="UniProtKB-KW"/>
</dbReference>
<dbReference type="GO" id="GO:0004550">
    <property type="term" value="F:nucleoside diphosphate kinase activity"/>
    <property type="evidence" value="ECO:0007669"/>
    <property type="project" value="UniProtKB-UniRule"/>
</dbReference>
<dbReference type="GO" id="GO:0006241">
    <property type="term" value="P:CTP biosynthetic process"/>
    <property type="evidence" value="ECO:0007669"/>
    <property type="project" value="UniProtKB-UniRule"/>
</dbReference>
<dbReference type="GO" id="GO:0006183">
    <property type="term" value="P:GTP biosynthetic process"/>
    <property type="evidence" value="ECO:0007669"/>
    <property type="project" value="UniProtKB-UniRule"/>
</dbReference>
<dbReference type="GO" id="GO:0006228">
    <property type="term" value="P:UTP biosynthetic process"/>
    <property type="evidence" value="ECO:0007669"/>
    <property type="project" value="UniProtKB-UniRule"/>
</dbReference>
<dbReference type="CDD" id="cd04413">
    <property type="entry name" value="NDPk_I"/>
    <property type="match status" value="1"/>
</dbReference>
<dbReference type="FunFam" id="3.30.70.141:FF:000003">
    <property type="entry name" value="Nucleoside diphosphate kinase"/>
    <property type="match status" value="1"/>
</dbReference>
<dbReference type="Gene3D" id="3.30.70.141">
    <property type="entry name" value="Nucleoside diphosphate kinase-like domain"/>
    <property type="match status" value="1"/>
</dbReference>
<dbReference type="HAMAP" id="MF_00451">
    <property type="entry name" value="NDP_kinase"/>
    <property type="match status" value="1"/>
</dbReference>
<dbReference type="InterPro" id="IPR034907">
    <property type="entry name" value="NDK-like_dom"/>
</dbReference>
<dbReference type="InterPro" id="IPR036850">
    <property type="entry name" value="NDK-like_dom_sf"/>
</dbReference>
<dbReference type="InterPro" id="IPR001564">
    <property type="entry name" value="Nucleoside_diP_kinase"/>
</dbReference>
<dbReference type="InterPro" id="IPR023005">
    <property type="entry name" value="Nucleoside_diP_kinase_AS"/>
</dbReference>
<dbReference type="NCBIfam" id="NF001908">
    <property type="entry name" value="PRK00668.1"/>
    <property type="match status" value="1"/>
</dbReference>
<dbReference type="PANTHER" id="PTHR46161">
    <property type="entry name" value="NUCLEOSIDE DIPHOSPHATE KINASE"/>
    <property type="match status" value="1"/>
</dbReference>
<dbReference type="PANTHER" id="PTHR46161:SF3">
    <property type="entry name" value="NUCLEOSIDE DIPHOSPHATE KINASE DDB_G0292928-RELATED"/>
    <property type="match status" value="1"/>
</dbReference>
<dbReference type="Pfam" id="PF00334">
    <property type="entry name" value="NDK"/>
    <property type="match status" value="1"/>
</dbReference>
<dbReference type="PRINTS" id="PR01243">
    <property type="entry name" value="NUCDPKINASE"/>
</dbReference>
<dbReference type="SMART" id="SM00562">
    <property type="entry name" value="NDK"/>
    <property type="match status" value="1"/>
</dbReference>
<dbReference type="SUPFAM" id="SSF54919">
    <property type="entry name" value="Nucleoside diphosphate kinase, NDK"/>
    <property type="match status" value="1"/>
</dbReference>
<dbReference type="PROSITE" id="PS00469">
    <property type="entry name" value="NDPK"/>
    <property type="match status" value="1"/>
</dbReference>
<dbReference type="PROSITE" id="PS51374">
    <property type="entry name" value="NDPK_LIKE"/>
    <property type="match status" value="1"/>
</dbReference>
<evidence type="ECO:0000255" key="1">
    <source>
        <dbReference type="HAMAP-Rule" id="MF_00451"/>
    </source>
</evidence>
<sequence length="141" mass="16111">MTLEQTLAIIKPDAVERNLIGNIISRLEDKGFQIIAMKMLHLNQEQAEGFYTEHSDKAFFAELIRYMTSAPIVVLVLQKENAVKDYRTFMGTTNPEIAENGTLRYEFAINQTQNSVHGSDSLENAQREIAYFFAEAEIYAR</sequence>
<keyword id="KW-0067">ATP-binding</keyword>
<keyword id="KW-0963">Cytoplasm</keyword>
<keyword id="KW-0418">Kinase</keyword>
<keyword id="KW-0460">Magnesium</keyword>
<keyword id="KW-0479">Metal-binding</keyword>
<keyword id="KW-0546">Nucleotide metabolism</keyword>
<keyword id="KW-0547">Nucleotide-binding</keyword>
<keyword id="KW-0597">Phosphoprotein</keyword>
<keyword id="KW-0808">Transferase</keyword>
<proteinExistence type="inferred from homology"/>
<protein>
    <recommendedName>
        <fullName evidence="1">Nucleoside diphosphate kinase</fullName>
        <shortName evidence="1">NDK</shortName>
        <shortName evidence="1">NDP kinase</shortName>
        <ecNumber evidence="1">2.7.4.6</ecNumber>
    </recommendedName>
    <alternativeName>
        <fullName evidence="1">Nucleoside-2-P kinase</fullName>
    </alternativeName>
</protein>
<reference key="1">
    <citation type="journal article" date="2007" name="J. Bacteriol.">
        <title>Complete genome sequence of Haemophilus somnus (Histophilus somni) strain 129Pt and comparison to Haemophilus ducreyi 35000HP and Haemophilus influenzae Rd.</title>
        <authorList>
            <person name="Challacombe J.F."/>
            <person name="Duncan A.J."/>
            <person name="Brettin T.S."/>
            <person name="Bruce D."/>
            <person name="Chertkov O."/>
            <person name="Detter J.C."/>
            <person name="Han C.S."/>
            <person name="Misra M."/>
            <person name="Richardson P."/>
            <person name="Tapia R."/>
            <person name="Thayer N."/>
            <person name="Xie G."/>
            <person name="Inzana T.J."/>
        </authorList>
    </citation>
    <scope>NUCLEOTIDE SEQUENCE [LARGE SCALE GENOMIC DNA]</scope>
    <source>
        <strain>129Pt</strain>
    </source>
</reference>
<organism>
    <name type="scientific">Histophilus somni (strain 129Pt)</name>
    <name type="common">Haemophilus somnus</name>
    <dbReference type="NCBI Taxonomy" id="205914"/>
    <lineage>
        <taxon>Bacteria</taxon>
        <taxon>Pseudomonadati</taxon>
        <taxon>Pseudomonadota</taxon>
        <taxon>Gammaproteobacteria</taxon>
        <taxon>Pasteurellales</taxon>
        <taxon>Pasteurellaceae</taxon>
        <taxon>Histophilus</taxon>
    </lineage>
</organism>
<feature type="chain" id="PRO_0000267782" description="Nucleoside diphosphate kinase">
    <location>
        <begin position="1"/>
        <end position="141"/>
    </location>
</feature>
<feature type="active site" description="Pros-phosphohistidine intermediate" evidence="1">
    <location>
        <position position="117"/>
    </location>
</feature>
<feature type="binding site" evidence="1">
    <location>
        <position position="11"/>
    </location>
    <ligand>
        <name>ATP</name>
        <dbReference type="ChEBI" id="CHEBI:30616"/>
    </ligand>
</feature>
<feature type="binding site" evidence="1">
    <location>
        <position position="59"/>
    </location>
    <ligand>
        <name>ATP</name>
        <dbReference type="ChEBI" id="CHEBI:30616"/>
    </ligand>
</feature>
<feature type="binding site" evidence="1">
    <location>
        <position position="87"/>
    </location>
    <ligand>
        <name>ATP</name>
        <dbReference type="ChEBI" id="CHEBI:30616"/>
    </ligand>
</feature>
<feature type="binding site" evidence="1">
    <location>
        <position position="93"/>
    </location>
    <ligand>
        <name>ATP</name>
        <dbReference type="ChEBI" id="CHEBI:30616"/>
    </ligand>
</feature>
<feature type="binding site" evidence="1">
    <location>
        <position position="104"/>
    </location>
    <ligand>
        <name>ATP</name>
        <dbReference type="ChEBI" id="CHEBI:30616"/>
    </ligand>
</feature>
<feature type="binding site" evidence="1">
    <location>
        <position position="114"/>
    </location>
    <ligand>
        <name>ATP</name>
        <dbReference type="ChEBI" id="CHEBI:30616"/>
    </ligand>
</feature>
<comment type="function">
    <text evidence="1">Major role in the synthesis of nucleoside triphosphates other than ATP. The ATP gamma phosphate is transferred to the NDP beta phosphate via a ping-pong mechanism, using a phosphorylated active-site intermediate.</text>
</comment>
<comment type="catalytic activity">
    <reaction evidence="1">
        <text>a 2'-deoxyribonucleoside 5'-diphosphate + ATP = a 2'-deoxyribonucleoside 5'-triphosphate + ADP</text>
        <dbReference type="Rhea" id="RHEA:44640"/>
        <dbReference type="ChEBI" id="CHEBI:30616"/>
        <dbReference type="ChEBI" id="CHEBI:61560"/>
        <dbReference type="ChEBI" id="CHEBI:73316"/>
        <dbReference type="ChEBI" id="CHEBI:456216"/>
        <dbReference type="EC" id="2.7.4.6"/>
    </reaction>
</comment>
<comment type="catalytic activity">
    <reaction evidence="1">
        <text>a ribonucleoside 5'-diphosphate + ATP = a ribonucleoside 5'-triphosphate + ADP</text>
        <dbReference type="Rhea" id="RHEA:18113"/>
        <dbReference type="ChEBI" id="CHEBI:30616"/>
        <dbReference type="ChEBI" id="CHEBI:57930"/>
        <dbReference type="ChEBI" id="CHEBI:61557"/>
        <dbReference type="ChEBI" id="CHEBI:456216"/>
        <dbReference type="EC" id="2.7.4.6"/>
    </reaction>
</comment>
<comment type="cofactor">
    <cofactor evidence="1">
        <name>Mg(2+)</name>
        <dbReference type="ChEBI" id="CHEBI:18420"/>
    </cofactor>
</comment>
<comment type="subunit">
    <text evidence="1">Homotetramer.</text>
</comment>
<comment type="subcellular location">
    <subcellularLocation>
        <location evidence="1">Cytoplasm</location>
    </subcellularLocation>
</comment>
<comment type="similarity">
    <text evidence="1">Belongs to the NDK family.</text>
</comment>
<name>NDK_HISS1</name>
<accession>Q0I2G6</accession>
<gene>
    <name evidence="1" type="primary">ndk</name>
    <name type="ordered locus">HS_0387</name>
</gene>